<name>TFEC_HUMAN</name>
<protein>
    <recommendedName>
        <fullName>Transcription factor EC</fullName>
        <shortName>TFE-C</shortName>
    </recommendedName>
    <alternativeName>
        <fullName>Class E basic helix-loop-helix protein 34</fullName>
        <shortName>bHLHe34</shortName>
    </alternativeName>
    <alternativeName>
        <fullName>Transcription factor EC-like</fullName>
        <shortName>hTFEC-L</shortName>
    </alternativeName>
</protein>
<dbReference type="EMBL" id="D43945">
    <property type="protein sequence ID" value="BAA21908.1"/>
    <property type="molecule type" value="mRNA"/>
</dbReference>
<dbReference type="EMBL" id="AK313546">
    <property type="protein sequence ID" value="BAG36322.1"/>
    <property type="molecule type" value="mRNA"/>
</dbReference>
<dbReference type="EMBL" id="CR933605">
    <property type="protein sequence ID" value="CAI45926.1"/>
    <property type="molecule type" value="mRNA"/>
</dbReference>
<dbReference type="EMBL" id="CH236947">
    <property type="protein sequence ID" value="EAL24366.1"/>
    <property type="molecule type" value="Genomic_DNA"/>
</dbReference>
<dbReference type="EMBL" id="CH471070">
    <property type="protein sequence ID" value="EAW83491.1"/>
    <property type="molecule type" value="Genomic_DNA"/>
</dbReference>
<dbReference type="EMBL" id="CH471070">
    <property type="protein sequence ID" value="EAW83492.1"/>
    <property type="molecule type" value="Genomic_DNA"/>
</dbReference>
<dbReference type="EMBL" id="BC029891">
    <property type="protein sequence ID" value="AAH29891.1"/>
    <property type="molecule type" value="mRNA"/>
</dbReference>
<dbReference type="EMBL" id="AJ608795">
    <property type="protein sequence ID" value="CAE77680.1"/>
    <property type="molecule type" value="mRNA"/>
</dbReference>
<dbReference type="CCDS" id="CCDS34738.1">
    <molecule id="O14948-2"/>
</dbReference>
<dbReference type="CCDS" id="CCDS5762.1">
    <molecule id="O14948-1"/>
</dbReference>
<dbReference type="CCDS" id="CCDS59076.1">
    <molecule id="O14948-4"/>
</dbReference>
<dbReference type="RefSeq" id="NP_001018068.1">
    <molecule id="O14948-2"/>
    <property type="nucleotide sequence ID" value="NM_001018058.3"/>
</dbReference>
<dbReference type="RefSeq" id="NP_001231512.1">
    <molecule id="O14948-4"/>
    <property type="nucleotide sequence ID" value="NM_001244583.2"/>
</dbReference>
<dbReference type="RefSeq" id="NP_036384.1">
    <molecule id="O14948-1"/>
    <property type="nucleotide sequence ID" value="NM_012252.4"/>
</dbReference>
<dbReference type="RefSeq" id="XP_016867364.1">
    <molecule id="O14948-1"/>
    <property type="nucleotide sequence ID" value="XM_017011875.2"/>
</dbReference>
<dbReference type="RefSeq" id="XP_054213598.1">
    <molecule id="O14948-1"/>
    <property type="nucleotide sequence ID" value="XM_054357623.1"/>
</dbReference>
<dbReference type="SMR" id="O14948"/>
<dbReference type="BioGRID" id="116478">
    <property type="interactions" value="15"/>
</dbReference>
<dbReference type="FunCoup" id="O14948">
    <property type="interactions" value="1914"/>
</dbReference>
<dbReference type="IntAct" id="O14948">
    <property type="interactions" value="8"/>
</dbReference>
<dbReference type="STRING" id="9606.ENSP00000265440"/>
<dbReference type="iPTMnet" id="O14948"/>
<dbReference type="PhosphoSitePlus" id="O14948"/>
<dbReference type="BioMuta" id="TFEC"/>
<dbReference type="jPOST" id="O14948"/>
<dbReference type="MassIVE" id="O14948"/>
<dbReference type="PaxDb" id="9606-ENSP00000265440"/>
<dbReference type="PeptideAtlas" id="O14948"/>
<dbReference type="ProteomicsDB" id="48328">
    <molecule id="O14948-1"/>
</dbReference>
<dbReference type="ProteomicsDB" id="48329">
    <molecule id="O14948-2"/>
</dbReference>
<dbReference type="ProteomicsDB" id="48330">
    <molecule id="O14948-3"/>
</dbReference>
<dbReference type="ProteomicsDB" id="48331">
    <molecule id="O14948-4"/>
</dbReference>
<dbReference type="Pumba" id="O14948"/>
<dbReference type="Antibodypedia" id="31571">
    <property type="antibodies" value="228 antibodies from 29 providers"/>
</dbReference>
<dbReference type="DNASU" id="22797"/>
<dbReference type="Ensembl" id="ENST00000265440.12">
    <molecule id="O14948-1"/>
    <property type="protein sequence ID" value="ENSP00000265440.7"/>
    <property type="gene ID" value="ENSG00000105967.16"/>
</dbReference>
<dbReference type="Ensembl" id="ENST00000320239.11">
    <molecule id="O14948-2"/>
    <property type="protein sequence ID" value="ENSP00000318676.7"/>
    <property type="gene ID" value="ENSG00000105967.16"/>
</dbReference>
<dbReference type="Ensembl" id="ENST00000393485.5">
    <molecule id="O14948-3"/>
    <property type="protein sequence ID" value="ENSP00000377125.1"/>
    <property type="gene ID" value="ENSG00000105967.16"/>
</dbReference>
<dbReference type="Ensembl" id="ENST00000457268.5">
    <molecule id="O14948-4"/>
    <property type="protein sequence ID" value="ENSP00000387650.1"/>
    <property type="gene ID" value="ENSG00000105967.16"/>
</dbReference>
<dbReference type="GeneID" id="22797"/>
<dbReference type="KEGG" id="hsa:22797"/>
<dbReference type="MANE-Select" id="ENST00000265440.12">
    <property type="protein sequence ID" value="ENSP00000265440.7"/>
    <property type="RefSeq nucleotide sequence ID" value="NM_012252.4"/>
    <property type="RefSeq protein sequence ID" value="NP_036384.1"/>
</dbReference>
<dbReference type="UCSC" id="uc003vhj.3">
    <molecule id="O14948-1"/>
    <property type="organism name" value="human"/>
</dbReference>
<dbReference type="AGR" id="HGNC:11754"/>
<dbReference type="CTD" id="22797"/>
<dbReference type="DisGeNET" id="22797"/>
<dbReference type="GeneCards" id="TFEC"/>
<dbReference type="HGNC" id="HGNC:11754">
    <property type="gene designation" value="TFEC"/>
</dbReference>
<dbReference type="HPA" id="ENSG00000105967">
    <property type="expression patterns" value="Tissue enhanced (bone marrow, kidney, lymphoid tissue)"/>
</dbReference>
<dbReference type="MalaCards" id="TFEC"/>
<dbReference type="MIM" id="604732">
    <property type="type" value="gene"/>
</dbReference>
<dbReference type="neXtProt" id="NX_O14948"/>
<dbReference type="OpenTargets" id="ENSG00000105967"/>
<dbReference type="PharmGKB" id="PA36469"/>
<dbReference type="VEuPathDB" id="HostDB:ENSG00000105967"/>
<dbReference type="eggNOG" id="KOG1318">
    <property type="taxonomic scope" value="Eukaryota"/>
</dbReference>
<dbReference type="GeneTree" id="ENSGT00940000159404"/>
<dbReference type="HOGENOM" id="CLU_031638_0_0_1"/>
<dbReference type="InParanoid" id="O14948"/>
<dbReference type="OMA" id="NHENEMD"/>
<dbReference type="OrthoDB" id="6242697at2759"/>
<dbReference type="PAN-GO" id="O14948">
    <property type="GO annotations" value="4 GO annotations based on evolutionary models"/>
</dbReference>
<dbReference type="PhylomeDB" id="O14948"/>
<dbReference type="TreeFam" id="TF317174"/>
<dbReference type="PathwayCommons" id="O14948"/>
<dbReference type="Reactome" id="R-HSA-9856649">
    <property type="pathway name" value="Transcriptional and post-translational regulation of MITF-M expression and activity"/>
</dbReference>
<dbReference type="SignaLink" id="O14948"/>
<dbReference type="SIGNOR" id="O14948"/>
<dbReference type="BioGRID-ORCS" id="22797">
    <property type="hits" value="24 hits in 1169 CRISPR screens"/>
</dbReference>
<dbReference type="ChiTaRS" id="TFEC">
    <property type="organism name" value="human"/>
</dbReference>
<dbReference type="GeneWiki" id="TFEC"/>
<dbReference type="GenomeRNAi" id="22797"/>
<dbReference type="Pharos" id="O14948">
    <property type="development level" value="Tbio"/>
</dbReference>
<dbReference type="PRO" id="PR:O14948"/>
<dbReference type="Proteomes" id="UP000005640">
    <property type="component" value="Chromosome 7"/>
</dbReference>
<dbReference type="RNAct" id="O14948">
    <property type="molecule type" value="protein"/>
</dbReference>
<dbReference type="Bgee" id="ENSG00000105967">
    <property type="expression patterns" value="Expressed in monocyte and 129 other cell types or tissues"/>
</dbReference>
<dbReference type="ExpressionAtlas" id="O14948">
    <property type="expression patterns" value="baseline and differential"/>
</dbReference>
<dbReference type="GO" id="GO:0000785">
    <property type="term" value="C:chromatin"/>
    <property type="evidence" value="ECO:0000247"/>
    <property type="project" value="NTNU_SB"/>
</dbReference>
<dbReference type="GO" id="GO:0005829">
    <property type="term" value="C:cytosol"/>
    <property type="evidence" value="ECO:0000314"/>
    <property type="project" value="HPA"/>
</dbReference>
<dbReference type="GO" id="GO:0005654">
    <property type="term" value="C:nucleoplasm"/>
    <property type="evidence" value="ECO:0000314"/>
    <property type="project" value="HPA"/>
</dbReference>
<dbReference type="GO" id="GO:0005634">
    <property type="term" value="C:nucleus"/>
    <property type="evidence" value="ECO:0000318"/>
    <property type="project" value="GO_Central"/>
</dbReference>
<dbReference type="GO" id="GO:0001228">
    <property type="term" value="F:DNA-binding transcription activator activity, RNA polymerase II-specific"/>
    <property type="evidence" value="ECO:0000304"/>
    <property type="project" value="GO_Central"/>
</dbReference>
<dbReference type="GO" id="GO:0000981">
    <property type="term" value="F:DNA-binding transcription factor activity, RNA polymerase II-specific"/>
    <property type="evidence" value="ECO:0000247"/>
    <property type="project" value="NTNU_SB"/>
</dbReference>
<dbReference type="GO" id="GO:0001227">
    <property type="term" value="F:DNA-binding transcription repressor activity, RNA polymerase II-specific"/>
    <property type="evidence" value="ECO:0000314"/>
    <property type="project" value="GO_Central"/>
</dbReference>
<dbReference type="GO" id="GO:0046983">
    <property type="term" value="F:protein dimerization activity"/>
    <property type="evidence" value="ECO:0007669"/>
    <property type="project" value="InterPro"/>
</dbReference>
<dbReference type="GO" id="GO:0000978">
    <property type="term" value="F:RNA polymerase II cis-regulatory region sequence-specific DNA binding"/>
    <property type="evidence" value="ECO:0000318"/>
    <property type="project" value="GO_Central"/>
</dbReference>
<dbReference type="GO" id="GO:1990837">
    <property type="term" value="F:sequence-specific double-stranded DNA binding"/>
    <property type="evidence" value="ECO:0000314"/>
    <property type="project" value="ARUK-UCL"/>
</dbReference>
<dbReference type="GO" id="GO:0034605">
    <property type="term" value="P:cellular response to heat"/>
    <property type="evidence" value="ECO:0007669"/>
    <property type="project" value="Ensembl"/>
</dbReference>
<dbReference type="GO" id="GO:0000122">
    <property type="term" value="P:negative regulation of transcription by RNA polymerase II"/>
    <property type="evidence" value="ECO:0000314"/>
    <property type="project" value="GO_Central"/>
</dbReference>
<dbReference type="GO" id="GO:0045944">
    <property type="term" value="P:positive regulation of transcription by RNA polymerase II"/>
    <property type="evidence" value="ECO:0000314"/>
    <property type="project" value="GO_Central"/>
</dbReference>
<dbReference type="GO" id="GO:0006357">
    <property type="term" value="P:regulation of transcription by RNA polymerase II"/>
    <property type="evidence" value="ECO:0000318"/>
    <property type="project" value="GO_Central"/>
</dbReference>
<dbReference type="CDD" id="cd18925">
    <property type="entry name" value="bHLHzip_TFEC"/>
    <property type="match status" value="1"/>
</dbReference>
<dbReference type="FunFam" id="4.10.280.10:FF:000003">
    <property type="entry name" value="microphthalmia-associated transcription factor isoform X1"/>
    <property type="match status" value="1"/>
</dbReference>
<dbReference type="Gene3D" id="4.10.280.10">
    <property type="entry name" value="Helix-loop-helix DNA-binding domain"/>
    <property type="match status" value="1"/>
</dbReference>
<dbReference type="InterPro" id="IPR011598">
    <property type="entry name" value="bHLH_dom"/>
</dbReference>
<dbReference type="InterPro" id="IPR036638">
    <property type="entry name" value="HLH_DNA-bd_sf"/>
</dbReference>
<dbReference type="InterPro" id="IPR021802">
    <property type="entry name" value="MiT/TFE_C"/>
</dbReference>
<dbReference type="PANTHER" id="PTHR45776">
    <property type="entry name" value="MIP04163P"/>
    <property type="match status" value="1"/>
</dbReference>
<dbReference type="PANTHER" id="PTHR45776:SF1">
    <property type="entry name" value="TRANSCRIPTION FACTOR EC"/>
    <property type="match status" value="1"/>
</dbReference>
<dbReference type="Pfam" id="PF11851">
    <property type="entry name" value="DUF3371"/>
    <property type="match status" value="1"/>
</dbReference>
<dbReference type="Pfam" id="PF00010">
    <property type="entry name" value="HLH"/>
    <property type="match status" value="1"/>
</dbReference>
<dbReference type="SMART" id="SM00353">
    <property type="entry name" value="HLH"/>
    <property type="match status" value="1"/>
</dbReference>
<dbReference type="SUPFAM" id="SSF47459">
    <property type="entry name" value="HLH, helix-loop-helix DNA-binding domain"/>
    <property type="match status" value="1"/>
</dbReference>
<dbReference type="PROSITE" id="PS50888">
    <property type="entry name" value="BHLH"/>
    <property type="match status" value="1"/>
</dbReference>
<comment type="function">
    <text evidence="1 4 7">Transcriptional regulator that acts as a repressor or an activator. Acts as a transcriptional repressor on minimal promoter containing element F (that includes an E-box sequence). Binds to element F in an E-box sequence-specific manner. Acts as a transcriptional transactivator on the proximal promoter region of the tartrate-resistant acid phosphatase (TRAP) E-box containing promoter (By similarity). Collaborates with MITF in target gene activation (By similarity). Acts as a transcriptional repressor on minimal promoter containing mu E3 enhancer sequence (By similarity). Binds to mu E3 DNA sequence of the immunoglobulin heavy-chain gene enhancer (By similarity). Binds DNA in a homo- or heterodimeric form.</text>
</comment>
<comment type="subunit">
    <text evidence="1">Homodimer. Forms heterodimers with TFE3. Forms heterodimers with MITF (By similarity). Interacts with MITF (By similarity).</text>
</comment>
<comment type="interaction">
    <interactant intactId="EBI-3916574">
        <id>O14948</id>
    </interactant>
    <interactant intactId="EBI-10305240">
        <id>Q9H1M4</id>
        <label>DEFB127</label>
    </interactant>
    <organismsDiffer>false</organismsDiffer>
    <experiments>3</experiments>
</comment>
<comment type="interaction">
    <interactant intactId="EBI-3916574">
        <id>O14948</id>
    </interactant>
    <interactant intactId="EBI-3921185">
        <id>Q9H115</id>
        <label>NAPB</label>
    </interactant>
    <organismsDiffer>false</organismsDiffer>
    <experiments>3</experiments>
</comment>
<comment type="interaction">
    <interactant intactId="EBI-12246506">
        <id>O14948-3</id>
    </interactant>
    <interactant intactId="EBI-12033434">
        <id>Q9UBY5</id>
        <label>LPAR3</label>
    </interactant>
    <organismsDiffer>false</organismsDiffer>
    <experiments>3</experiments>
</comment>
<comment type="interaction">
    <interactant intactId="EBI-12246506">
        <id>O14948-3</id>
    </interactant>
    <interactant intactId="EBI-8640191">
        <id>Q9NRQ5</id>
        <label>SMCO4</label>
    </interactant>
    <organismsDiffer>false</organismsDiffer>
    <experiments>3</experiments>
</comment>
<comment type="subcellular location">
    <subcellularLocation>
        <location evidence="2 4">Nucleus</location>
    </subcellularLocation>
</comment>
<comment type="alternative products">
    <event type="alternative splicing"/>
    <isoform>
        <id>O14948-1</id>
        <name>1</name>
        <name>TFEC-l</name>
        <name>TFECL</name>
        <sequence type="displayed"/>
    </isoform>
    <isoform>
        <id>O14948-2</id>
        <name>2</name>
        <name>TFEC-s</name>
        <sequence type="described" ref="VSP_030023"/>
    </isoform>
    <isoform>
        <id>O14948-3</id>
        <name>3</name>
        <sequence type="described" ref="VSP_030023 VSP_030025 VSP_030026"/>
    </isoform>
    <isoform>
        <id>O14948-4</id>
        <name>4</name>
        <name>TFEC-C</name>
        <sequence type="described" ref="VSP_030022 VSP_030024"/>
    </isoform>
</comment>
<comment type="tissue specificity">
    <text evidence="4 5">Expressed moderately in spleen, kidney, bone marrow, small intestine and leukocytes. Expressed weakly in testis, trachea and colon.</text>
</comment>
<comment type="similarity">
    <text evidence="11">Belongs to the MiT/TFE family.</text>
</comment>
<organism>
    <name type="scientific">Homo sapiens</name>
    <name type="common">Human</name>
    <dbReference type="NCBI Taxonomy" id="9606"/>
    <lineage>
        <taxon>Eukaryota</taxon>
        <taxon>Metazoa</taxon>
        <taxon>Chordata</taxon>
        <taxon>Craniata</taxon>
        <taxon>Vertebrata</taxon>
        <taxon>Euteleostomi</taxon>
        <taxon>Mammalia</taxon>
        <taxon>Eutheria</taxon>
        <taxon>Euarchontoglires</taxon>
        <taxon>Primates</taxon>
        <taxon>Haplorrhini</taxon>
        <taxon>Catarrhini</taxon>
        <taxon>Hominidae</taxon>
        <taxon>Homo</taxon>
    </lineage>
</organism>
<feature type="chain" id="PRO_0000313564" description="Transcription factor EC">
    <location>
        <begin position="1"/>
        <end position="347"/>
    </location>
</feature>
<feature type="domain" description="bHLH" evidence="2">
    <location>
        <begin position="139"/>
        <end position="192"/>
    </location>
</feature>
<feature type="region of interest" description="Necessary for transcriptional transactivation">
    <location>
        <begin position="1"/>
        <end position="119"/>
    </location>
</feature>
<feature type="region of interest" description="Necessary for transcriptional transactivation">
    <location>
        <begin position="271"/>
        <end position="347"/>
    </location>
</feature>
<feature type="region of interest" description="Disordered" evidence="3">
    <location>
        <begin position="319"/>
        <end position="347"/>
    </location>
</feature>
<feature type="compositionally biased region" description="Low complexity" evidence="3">
    <location>
        <begin position="326"/>
        <end position="341"/>
    </location>
</feature>
<feature type="splice variant" id="VSP_030022" description="In isoform 4." evidence="8">
    <location>
        <begin position="1"/>
        <end position="67"/>
    </location>
</feature>
<feature type="splice variant" id="VSP_030023" description="In isoform 2 and isoform 3." evidence="9 10">
    <location>
        <begin position="61"/>
        <end position="89"/>
    </location>
</feature>
<feature type="splice variant" id="VSP_030024" description="In isoform 4." evidence="8">
    <original>IIGMESSFKEEGADSPLLMQRT</original>
    <variation>MMKEKEKTIAIVKVIDTSKLKL</variation>
    <location>
        <begin position="68"/>
        <end position="89"/>
    </location>
</feature>
<feature type="splice variant" id="VSP_030025" description="In isoform 3." evidence="9">
    <original>ELEIQ</original>
    <variation>VFIRM</variation>
    <location>
        <begin position="222"/>
        <end position="226"/>
    </location>
</feature>
<feature type="splice variant" id="VSP_030026" description="In isoform 3." evidence="9">
    <location>
        <begin position="227"/>
        <end position="347"/>
    </location>
</feature>
<feature type="sequence variant" id="VAR_037661" description="In dbSNP:rs35695387.">
    <original>Q</original>
    <variation>H</variation>
    <location>
        <position position="6"/>
    </location>
</feature>
<feature type="sequence variant" id="VAR_037662" description="In dbSNP:rs35170691.">
    <original>G</original>
    <variation>S</variation>
    <location>
        <position position="100"/>
    </location>
</feature>
<feature type="sequence variant" id="VAR_037663" description="In a colorectal cancer sample; somatic mutation." evidence="6">
    <original>L</original>
    <variation>V</variation>
    <location>
        <position position="146"/>
    </location>
</feature>
<reference key="1">
    <citation type="journal article" date="1997" name="Biochim. Biophys. Acta">
        <title>Molecular cloning of cDNA encoding a human TFEC isoform, a newly identified transcriptional regulator.</title>
        <authorList>
            <person name="Yasumoto K."/>
            <person name="Shibahara S."/>
        </authorList>
    </citation>
    <scope>NUCLEOTIDE SEQUENCE [MRNA] (ISOFORM 1)</scope>
    <scope>FUNCTION</scope>
    <source>
        <tissue>Monocytic leukemia</tissue>
    </source>
</reference>
<reference key="2">
    <citation type="journal article" date="2004" name="Nat. Genet.">
        <title>Complete sequencing and characterization of 21,243 full-length human cDNAs.</title>
        <authorList>
            <person name="Ota T."/>
            <person name="Suzuki Y."/>
            <person name="Nishikawa T."/>
            <person name="Otsuki T."/>
            <person name="Sugiyama T."/>
            <person name="Irie R."/>
            <person name="Wakamatsu A."/>
            <person name="Hayashi K."/>
            <person name="Sato H."/>
            <person name="Nagai K."/>
            <person name="Kimura K."/>
            <person name="Makita H."/>
            <person name="Sekine M."/>
            <person name="Obayashi M."/>
            <person name="Nishi T."/>
            <person name="Shibahara T."/>
            <person name="Tanaka T."/>
            <person name="Ishii S."/>
            <person name="Yamamoto J."/>
            <person name="Saito K."/>
            <person name="Kawai Y."/>
            <person name="Isono Y."/>
            <person name="Nakamura Y."/>
            <person name="Nagahari K."/>
            <person name="Murakami K."/>
            <person name="Yasuda T."/>
            <person name="Iwayanagi T."/>
            <person name="Wagatsuma M."/>
            <person name="Shiratori A."/>
            <person name="Sudo H."/>
            <person name="Hosoiri T."/>
            <person name="Kaku Y."/>
            <person name="Kodaira H."/>
            <person name="Kondo H."/>
            <person name="Sugawara M."/>
            <person name="Takahashi M."/>
            <person name="Kanda K."/>
            <person name="Yokoi T."/>
            <person name="Furuya T."/>
            <person name="Kikkawa E."/>
            <person name="Omura Y."/>
            <person name="Abe K."/>
            <person name="Kamihara K."/>
            <person name="Katsuta N."/>
            <person name="Sato K."/>
            <person name="Tanikawa M."/>
            <person name="Yamazaki M."/>
            <person name="Ninomiya K."/>
            <person name="Ishibashi T."/>
            <person name="Yamashita H."/>
            <person name="Murakawa K."/>
            <person name="Fujimori K."/>
            <person name="Tanai H."/>
            <person name="Kimata M."/>
            <person name="Watanabe M."/>
            <person name="Hiraoka S."/>
            <person name="Chiba Y."/>
            <person name="Ishida S."/>
            <person name="Ono Y."/>
            <person name="Takiguchi S."/>
            <person name="Watanabe S."/>
            <person name="Yosida M."/>
            <person name="Hotuta T."/>
            <person name="Kusano J."/>
            <person name="Kanehori K."/>
            <person name="Takahashi-Fujii A."/>
            <person name="Hara H."/>
            <person name="Tanase T.-O."/>
            <person name="Nomura Y."/>
            <person name="Togiya S."/>
            <person name="Komai F."/>
            <person name="Hara R."/>
            <person name="Takeuchi K."/>
            <person name="Arita M."/>
            <person name="Imose N."/>
            <person name="Musashino K."/>
            <person name="Yuuki H."/>
            <person name="Oshima A."/>
            <person name="Sasaki N."/>
            <person name="Aotsuka S."/>
            <person name="Yoshikawa Y."/>
            <person name="Matsunawa H."/>
            <person name="Ichihara T."/>
            <person name="Shiohata N."/>
            <person name="Sano S."/>
            <person name="Moriya S."/>
            <person name="Momiyama H."/>
            <person name="Satoh N."/>
            <person name="Takami S."/>
            <person name="Terashima Y."/>
            <person name="Suzuki O."/>
            <person name="Nakagawa S."/>
            <person name="Senoh A."/>
            <person name="Mizoguchi H."/>
            <person name="Goto Y."/>
            <person name="Shimizu F."/>
            <person name="Wakebe H."/>
            <person name="Hishigaki H."/>
            <person name="Watanabe T."/>
            <person name="Sugiyama A."/>
            <person name="Takemoto M."/>
            <person name="Kawakami B."/>
            <person name="Yamazaki M."/>
            <person name="Watanabe K."/>
            <person name="Kumagai A."/>
            <person name="Itakura S."/>
            <person name="Fukuzumi Y."/>
            <person name="Fujimori Y."/>
            <person name="Komiyama M."/>
            <person name="Tashiro H."/>
            <person name="Tanigami A."/>
            <person name="Fujiwara T."/>
            <person name="Ono T."/>
            <person name="Yamada K."/>
            <person name="Fujii Y."/>
            <person name="Ozaki K."/>
            <person name="Hirao M."/>
            <person name="Ohmori Y."/>
            <person name="Kawabata A."/>
            <person name="Hikiji T."/>
            <person name="Kobatake N."/>
            <person name="Inagaki H."/>
            <person name="Ikema Y."/>
            <person name="Okamoto S."/>
            <person name="Okitani R."/>
            <person name="Kawakami T."/>
            <person name="Noguchi S."/>
            <person name="Itoh T."/>
            <person name="Shigeta K."/>
            <person name="Senba T."/>
            <person name="Matsumura K."/>
            <person name="Nakajima Y."/>
            <person name="Mizuno T."/>
            <person name="Morinaga M."/>
            <person name="Sasaki M."/>
            <person name="Togashi T."/>
            <person name="Oyama M."/>
            <person name="Hata H."/>
            <person name="Watanabe M."/>
            <person name="Komatsu T."/>
            <person name="Mizushima-Sugano J."/>
            <person name="Satoh T."/>
            <person name="Shirai Y."/>
            <person name="Takahashi Y."/>
            <person name="Nakagawa K."/>
            <person name="Okumura K."/>
            <person name="Nagase T."/>
            <person name="Nomura N."/>
            <person name="Kikuchi H."/>
            <person name="Masuho Y."/>
            <person name="Yamashita R."/>
            <person name="Nakai K."/>
            <person name="Yada T."/>
            <person name="Nakamura Y."/>
            <person name="Ohara O."/>
            <person name="Isogai T."/>
            <person name="Sugano S."/>
        </authorList>
    </citation>
    <scope>NUCLEOTIDE SEQUENCE [LARGE SCALE MRNA] (ISOFORM 1)</scope>
</reference>
<reference key="3">
    <citation type="journal article" date="2007" name="BMC Genomics">
        <title>The full-ORF clone resource of the German cDNA consortium.</title>
        <authorList>
            <person name="Bechtel S."/>
            <person name="Rosenfelder H."/>
            <person name="Duda A."/>
            <person name="Schmidt C.P."/>
            <person name="Ernst U."/>
            <person name="Wellenreuther R."/>
            <person name="Mehrle A."/>
            <person name="Schuster C."/>
            <person name="Bahr A."/>
            <person name="Bloecker H."/>
            <person name="Heubner D."/>
            <person name="Hoerlein A."/>
            <person name="Michel G."/>
            <person name="Wedler H."/>
            <person name="Koehrer K."/>
            <person name="Ottenwaelder B."/>
            <person name="Poustka A."/>
            <person name="Wiemann S."/>
            <person name="Schupp I."/>
        </authorList>
    </citation>
    <scope>NUCLEOTIDE SEQUENCE [LARGE SCALE MRNA] (ISOFORM 2)</scope>
    <source>
        <tissue>Fetal kidney</tissue>
    </source>
</reference>
<reference key="4">
    <citation type="journal article" date="2003" name="Science">
        <title>Human chromosome 7: DNA sequence and biology.</title>
        <authorList>
            <person name="Scherer S.W."/>
            <person name="Cheung J."/>
            <person name="MacDonald J.R."/>
            <person name="Osborne L.R."/>
            <person name="Nakabayashi K."/>
            <person name="Herbrick J.-A."/>
            <person name="Carson A.R."/>
            <person name="Parker-Katiraee L."/>
            <person name="Skaug J."/>
            <person name="Khaja R."/>
            <person name="Zhang J."/>
            <person name="Hudek A.K."/>
            <person name="Li M."/>
            <person name="Haddad M."/>
            <person name="Duggan G.E."/>
            <person name="Fernandez B.A."/>
            <person name="Kanematsu E."/>
            <person name="Gentles S."/>
            <person name="Christopoulos C.C."/>
            <person name="Choufani S."/>
            <person name="Kwasnicka D."/>
            <person name="Zheng X.H."/>
            <person name="Lai Z."/>
            <person name="Nusskern D.R."/>
            <person name="Zhang Q."/>
            <person name="Gu Z."/>
            <person name="Lu F."/>
            <person name="Zeesman S."/>
            <person name="Nowaczyk M.J."/>
            <person name="Teshima I."/>
            <person name="Chitayat D."/>
            <person name="Shuman C."/>
            <person name="Weksberg R."/>
            <person name="Zackai E.H."/>
            <person name="Grebe T.A."/>
            <person name="Cox S.R."/>
            <person name="Kirkpatrick S.J."/>
            <person name="Rahman N."/>
            <person name="Friedman J.M."/>
            <person name="Heng H.H.Q."/>
            <person name="Pelicci P.G."/>
            <person name="Lo-Coco F."/>
            <person name="Belloni E."/>
            <person name="Shaffer L.G."/>
            <person name="Pober B."/>
            <person name="Morton C.C."/>
            <person name="Gusella J.F."/>
            <person name="Bruns G.A.P."/>
            <person name="Korf B.R."/>
            <person name="Quade B.J."/>
            <person name="Ligon A.H."/>
            <person name="Ferguson H."/>
            <person name="Higgins A.W."/>
            <person name="Leach N.T."/>
            <person name="Herrick S.R."/>
            <person name="Lemyre E."/>
            <person name="Farra C.G."/>
            <person name="Kim H.-G."/>
            <person name="Summers A.M."/>
            <person name="Gripp K.W."/>
            <person name="Roberts W."/>
            <person name="Szatmari P."/>
            <person name="Winsor E.J.T."/>
            <person name="Grzeschik K.-H."/>
            <person name="Teebi A."/>
            <person name="Minassian B.A."/>
            <person name="Kere J."/>
            <person name="Armengol L."/>
            <person name="Pujana M.A."/>
            <person name="Estivill X."/>
            <person name="Wilson M.D."/>
            <person name="Koop B.F."/>
            <person name="Tosi S."/>
            <person name="Moore G.E."/>
            <person name="Boright A.P."/>
            <person name="Zlotorynski E."/>
            <person name="Kerem B."/>
            <person name="Kroisel P.M."/>
            <person name="Petek E."/>
            <person name="Oscier D.G."/>
            <person name="Mould S.J."/>
            <person name="Doehner H."/>
            <person name="Doehner K."/>
            <person name="Rommens J.M."/>
            <person name="Vincent J.B."/>
            <person name="Venter J.C."/>
            <person name="Li P.W."/>
            <person name="Mural R.J."/>
            <person name="Adams M.D."/>
            <person name="Tsui L.-C."/>
        </authorList>
    </citation>
    <scope>NUCLEOTIDE SEQUENCE [LARGE SCALE GENOMIC DNA]</scope>
</reference>
<reference key="5">
    <citation type="submission" date="2004-06" db="EMBL/GenBank/DDBJ databases">
        <authorList>
            <person name="Mural R.J."/>
            <person name="Istrail S."/>
            <person name="Sutton G.G."/>
            <person name="Florea L."/>
            <person name="Halpern A.L."/>
            <person name="Mobarry C.M."/>
            <person name="Lippert R."/>
            <person name="Walenz B."/>
            <person name="Shatkay H."/>
            <person name="Dew I."/>
            <person name="Miller J.R."/>
            <person name="Flanigan M.J."/>
            <person name="Edwards N.J."/>
            <person name="Bolanos R."/>
            <person name="Fasulo D."/>
            <person name="Halldorsson B.V."/>
            <person name="Hannenhalli S."/>
            <person name="Turner R."/>
            <person name="Yooseph S."/>
            <person name="Lu F."/>
            <person name="Nusskern D.R."/>
            <person name="Shue B.C."/>
            <person name="Zheng X.H."/>
            <person name="Zhong F."/>
            <person name="Delcher A.L."/>
            <person name="Huson D.H."/>
            <person name="Kravitz S.A."/>
            <person name="Mouchard L."/>
            <person name="Reinert K."/>
            <person name="Remington K.A."/>
            <person name="Clark A.G."/>
            <person name="Waterman M.S."/>
            <person name="Eichler E.E."/>
            <person name="Adams M.D."/>
            <person name="Hunkapiller M.W."/>
            <person name="Myers E.W."/>
            <person name="Venter J.C."/>
        </authorList>
    </citation>
    <scope>NUCLEOTIDE SEQUENCE [LARGE SCALE GENOMIC DNA]</scope>
</reference>
<reference key="6">
    <citation type="journal article" date="2004" name="Genome Res.">
        <title>The status, quality, and expansion of the NIH full-length cDNA project: the Mammalian Gene Collection (MGC).</title>
        <authorList>
            <consortium name="The MGC Project Team"/>
        </authorList>
    </citation>
    <scope>NUCLEOTIDE SEQUENCE [LARGE SCALE MRNA] (ISOFORM 3)</scope>
    <source>
        <tissue>Brain</tissue>
    </source>
</reference>
<reference key="7">
    <citation type="journal article" date="2004" name="Nucleic Acids Res.">
        <title>Regulation of the MiTF/TFE bHLH-LZ transcription factors through restricted spatial expression and alternative splicing of functional domains.</title>
        <authorList>
            <person name="Kuiper R.P."/>
            <person name="Schepens M."/>
            <person name="Thijssen J."/>
            <person name="Schoenmakers E.F.P.M."/>
            <person name="Geurts van Kessel A."/>
        </authorList>
    </citation>
    <scope>NUCLEOTIDE SEQUENCE [MRNA] OF 1-104 (ISOFORM 4)</scope>
    <scope>TISSUE SPECIFICITY</scope>
</reference>
<reference key="8">
    <citation type="journal article" date="2001" name="Biochemistry">
        <title>TFEC can function as a transcriptional activator of the nonmuscle myosin II heavy chain-A gene in transfected cells.</title>
        <authorList>
            <person name="Chung M.-C."/>
            <person name="Kim H.-K."/>
            <person name="Kawamoto S."/>
        </authorList>
    </citation>
    <scope>FUNCTION</scope>
    <scope>SUBUNIT</scope>
    <scope>DNA-BINDING</scope>
    <scope>SUBCELLULAR LOCATION</scope>
    <scope>ALTERNATIVE SPLICING (ISOFORMS 1 AND 2)</scope>
    <scope>TISSUE SPECIFICITY</scope>
</reference>
<reference key="9">
    <citation type="journal article" date="2006" name="Science">
        <title>The consensus coding sequences of human breast and colorectal cancers.</title>
        <authorList>
            <person name="Sjoeblom T."/>
            <person name="Jones S."/>
            <person name="Wood L.D."/>
            <person name="Parsons D.W."/>
            <person name="Lin J."/>
            <person name="Barber T.D."/>
            <person name="Mandelker D."/>
            <person name="Leary R.J."/>
            <person name="Ptak J."/>
            <person name="Silliman N."/>
            <person name="Szabo S."/>
            <person name="Buckhaults P."/>
            <person name="Farrell C."/>
            <person name="Meeh P."/>
            <person name="Markowitz S.D."/>
            <person name="Willis J."/>
            <person name="Dawson D."/>
            <person name="Willson J.K.V."/>
            <person name="Gazdar A.F."/>
            <person name="Hartigan J."/>
            <person name="Wu L."/>
            <person name="Liu C."/>
            <person name="Parmigiani G."/>
            <person name="Park B.H."/>
            <person name="Bachman K.E."/>
            <person name="Papadopoulos N."/>
            <person name="Vogelstein B."/>
            <person name="Kinzler K.W."/>
            <person name="Velculescu V.E."/>
        </authorList>
    </citation>
    <scope>VARIANT [LARGE SCALE ANALYSIS] VAL-146</scope>
</reference>
<keyword id="KW-0010">Activator</keyword>
<keyword id="KW-0025">Alternative splicing</keyword>
<keyword id="KW-0238">DNA-binding</keyword>
<keyword id="KW-0539">Nucleus</keyword>
<keyword id="KW-1267">Proteomics identification</keyword>
<keyword id="KW-1185">Reference proteome</keyword>
<keyword id="KW-0678">Repressor</keyword>
<keyword id="KW-0804">Transcription</keyword>
<keyword id="KW-0805">Transcription regulation</keyword>
<proteinExistence type="evidence at protein level"/>
<sequence>MTLDHQIINPTLKWSQPAVPSGGPLVQHAHTTLDSDAGLTENPLTKLLAIGKEDDNAQWHMEDVIEDIIGMESSFKEEGADSPLLMQRTLSGSILDVYSGEQGISPINMGLTSASCPSSLPMKREITETDTRALAKERQKKDNHNLIERRRRYNINYRIKELGTLIPKSNDPDMRWNKGTILKASVEYIKWLQKEQQRARELEHRQKKLEQANRRLLLRIQELEIQARTHGLPTLASLGTVDLGAHVTKQQSHPEQNSVDYCQQLTVSQGPSPELCDQAIAFSDPLSYFTDLSFSAALKEEQRLDGMLLDDTISPFGTDPLLSATSPAVSKESSRRSSFSSDDGDEL</sequence>
<gene>
    <name type="primary">TFEC</name>
    <name type="synonym">BHLHE34</name>
    <name type="synonym">TCFEC</name>
    <name type="synonym">TFECL</name>
</gene>
<accession>O14948</accession>
<accession>B2R8X5</accession>
<accession>Q5H9U8</accession>
<accession>Q709A4</accession>
<accession>Q8N6J9</accession>
<evidence type="ECO:0000250" key="1"/>
<evidence type="ECO:0000255" key="2">
    <source>
        <dbReference type="PROSITE-ProRule" id="PRU00981"/>
    </source>
</evidence>
<evidence type="ECO:0000256" key="3">
    <source>
        <dbReference type="SAM" id="MobiDB-lite"/>
    </source>
</evidence>
<evidence type="ECO:0000269" key="4">
    <source>
    </source>
</evidence>
<evidence type="ECO:0000269" key="5">
    <source>
    </source>
</evidence>
<evidence type="ECO:0000269" key="6">
    <source>
    </source>
</evidence>
<evidence type="ECO:0000269" key="7">
    <source>
    </source>
</evidence>
<evidence type="ECO:0000303" key="8">
    <source>
    </source>
</evidence>
<evidence type="ECO:0000303" key="9">
    <source>
    </source>
</evidence>
<evidence type="ECO:0000303" key="10">
    <source>
    </source>
</evidence>
<evidence type="ECO:0000305" key="11"/>